<protein>
    <recommendedName>
        <fullName evidence="7">Subtilisin-like protease SBT4.10</fullName>
        <ecNumber evidence="6">3.4.21.-</ecNumber>
    </recommendedName>
    <alternativeName>
        <fullName evidence="7">Subtilase subfamily 4 member 10</fullName>
        <shortName evidence="7">AtSBT4.10</shortName>
    </alternativeName>
</protein>
<organism>
    <name type="scientific">Arabidopsis thaliana</name>
    <name type="common">Mouse-ear cress</name>
    <dbReference type="NCBI Taxonomy" id="3702"/>
    <lineage>
        <taxon>Eukaryota</taxon>
        <taxon>Viridiplantae</taxon>
        <taxon>Streptophyta</taxon>
        <taxon>Embryophyta</taxon>
        <taxon>Tracheophyta</taxon>
        <taxon>Spermatophyta</taxon>
        <taxon>Magnoliopsida</taxon>
        <taxon>eudicotyledons</taxon>
        <taxon>Gunneridae</taxon>
        <taxon>Pentapetalae</taxon>
        <taxon>rosids</taxon>
        <taxon>malvids</taxon>
        <taxon>Brassicales</taxon>
        <taxon>Brassicaceae</taxon>
        <taxon>Camelineae</taxon>
        <taxon>Arabidopsis</taxon>
    </lineage>
</organism>
<dbReference type="EC" id="3.4.21.-" evidence="6"/>
<dbReference type="EMBL" id="AB016885">
    <property type="protein sequence ID" value="BAB09626.1"/>
    <property type="molecule type" value="Genomic_DNA"/>
</dbReference>
<dbReference type="EMBL" id="CP002688">
    <property type="status" value="NOT_ANNOTATED_CDS"/>
    <property type="molecule type" value="Genomic_DNA"/>
</dbReference>
<dbReference type="SMR" id="Q9FIM8"/>
<dbReference type="STRING" id="3702.Q9FIM8"/>
<dbReference type="MEROPS" id="S08.A10"/>
<dbReference type="GlyCosmos" id="Q9FIM8">
    <property type="glycosylation" value="9 sites, No reported glycans"/>
</dbReference>
<dbReference type="GlyGen" id="Q9FIM8">
    <property type="glycosylation" value="10 sites"/>
</dbReference>
<dbReference type="PeptideAtlas" id="Q9FIM8"/>
<dbReference type="Araport" id="AT5G58810"/>
<dbReference type="TAIR" id="AT5G58810"/>
<dbReference type="InParanoid" id="Q9FIM8"/>
<dbReference type="Proteomes" id="UP000006548">
    <property type="component" value="Chromosome 5"/>
</dbReference>
<dbReference type="ExpressionAtlas" id="Q9FIM8">
    <property type="expression patterns" value="baseline and differential"/>
</dbReference>
<dbReference type="GO" id="GO:0005576">
    <property type="term" value="C:extracellular region"/>
    <property type="evidence" value="ECO:0007669"/>
    <property type="project" value="UniProtKB-SubCell"/>
</dbReference>
<dbReference type="GO" id="GO:0004252">
    <property type="term" value="F:serine-type endopeptidase activity"/>
    <property type="evidence" value="ECO:0007669"/>
    <property type="project" value="InterPro"/>
</dbReference>
<dbReference type="GO" id="GO:0006508">
    <property type="term" value="P:proteolysis"/>
    <property type="evidence" value="ECO:0007669"/>
    <property type="project" value="UniProtKB-KW"/>
</dbReference>
<dbReference type="CDD" id="cd04852">
    <property type="entry name" value="Peptidases_S8_3"/>
    <property type="match status" value="1"/>
</dbReference>
<dbReference type="FunFam" id="3.30.70.80:FF:000002">
    <property type="entry name" value="Subtilisin-like protease SBT5.3"/>
    <property type="match status" value="1"/>
</dbReference>
<dbReference type="Gene3D" id="2.60.40.2310">
    <property type="match status" value="1"/>
</dbReference>
<dbReference type="Gene3D" id="3.30.70.80">
    <property type="entry name" value="Peptidase S8 propeptide/proteinase inhibitor I9"/>
    <property type="match status" value="1"/>
</dbReference>
<dbReference type="Gene3D" id="3.40.50.200">
    <property type="entry name" value="Peptidase S8/S53 domain"/>
    <property type="match status" value="2"/>
</dbReference>
<dbReference type="InterPro" id="IPR000209">
    <property type="entry name" value="Peptidase_S8/S53_dom"/>
</dbReference>
<dbReference type="InterPro" id="IPR036852">
    <property type="entry name" value="Peptidase_S8/S53_dom_sf"/>
</dbReference>
<dbReference type="InterPro" id="IPR023828">
    <property type="entry name" value="Peptidase_S8_Ser-AS"/>
</dbReference>
<dbReference type="InterPro" id="IPR015500">
    <property type="entry name" value="Peptidase_S8_subtilisin-rel"/>
</dbReference>
<dbReference type="InterPro" id="IPR034197">
    <property type="entry name" value="Peptidases_S8_3"/>
</dbReference>
<dbReference type="InterPro" id="IPR010259">
    <property type="entry name" value="S8pro/Inhibitor_I9"/>
</dbReference>
<dbReference type="InterPro" id="IPR037045">
    <property type="entry name" value="S8pro/Inhibitor_I9_sf"/>
</dbReference>
<dbReference type="InterPro" id="IPR045051">
    <property type="entry name" value="SBT"/>
</dbReference>
<dbReference type="InterPro" id="IPR041469">
    <property type="entry name" value="Subtilisin-like_FN3"/>
</dbReference>
<dbReference type="PANTHER" id="PTHR10795">
    <property type="entry name" value="PROPROTEIN CONVERTASE SUBTILISIN/KEXIN"/>
    <property type="match status" value="1"/>
</dbReference>
<dbReference type="Pfam" id="PF17766">
    <property type="entry name" value="fn3_6"/>
    <property type="match status" value="1"/>
</dbReference>
<dbReference type="Pfam" id="PF05922">
    <property type="entry name" value="Inhibitor_I9"/>
    <property type="match status" value="1"/>
</dbReference>
<dbReference type="Pfam" id="PF00082">
    <property type="entry name" value="Peptidase_S8"/>
    <property type="match status" value="1"/>
</dbReference>
<dbReference type="PRINTS" id="PR00723">
    <property type="entry name" value="SUBTILISIN"/>
</dbReference>
<dbReference type="SUPFAM" id="SSF52743">
    <property type="entry name" value="Subtilisin-like"/>
    <property type="match status" value="1"/>
</dbReference>
<dbReference type="PROSITE" id="PS51892">
    <property type="entry name" value="SUBTILASE"/>
    <property type="match status" value="1"/>
</dbReference>
<dbReference type="PROSITE" id="PS00138">
    <property type="entry name" value="SUBTILASE_SER"/>
    <property type="match status" value="1"/>
</dbReference>
<feature type="signal peptide" evidence="3">
    <location>
        <begin position="1"/>
        <end position="25"/>
    </location>
</feature>
<feature type="propeptide" id="PRO_0000435244" description="Activation peptide" evidence="1">
    <location>
        <begin position="26"/>
        <end position="113"/>
    </location>
</feature>
<feature type="chain" id="PRO_5004325497" description="Subtilisin-like protease SBT4.10" evidence="3">
    <location>
        <begin position="114"/>
        <end status="unknown"/>
    </location>
</feature>
<feature type="propeptide" id="PRO_0000435245" evidence="1">
    <location>
        <begin status="unknown"/>
        <end position="693"/>
    </location>
</feature>
<feature type="domain" description="Inhibitor I9" evidence="3">
    <location>
        <begin position="35"/>
        <end position="113"/>
    </location>
</feature>
<feature type="domain" description="Peptidase S8" evidence="5">
    <location>
        <begin position="117"/>
        <end position="536"/>
    </location>
</feature>
<feature type="domain" description="PA" evidence="3">
    <location>
        <begin position="354"/>
        <end position="396"/>
    </location>
</feature>
<feature type="active site" description="Charge relay system" evidence="5">
    <location>
        <position position="145"/>
    </location>
</feature>
<feature type="active site" description="Charge relay system" evidence="5">
    <location>
        <position position="200"/>
    </location>
</feature>
<feature type="active site" description="Charge relay system" evidence="5">
    <location>
        <position position="475"/>
    </location>
</feature>
<feature type="glycosylation site" description="N-linked (GlcNAc...) asparagine" evidence="4">
    <location>
        <position position="176"/>
    </location>
</feature>
<feature type="glycosylation site" description="N-linked (GlcNAc...) asparagine" evidence="4">
    <location>
        <position position="215"/>
    </location>
</feature>
<feature type="glycosylation site" description="N-linked (GlcNAc...) asparagine" evidence="4">
    <location>
        <position position="223"/>
    </location>
</feature>
<feature type="glycosylation site" description="N-linked (GlcNAc...) asparagine" evidence="4">
    <location>
        <position position="368"/>
    </location>
</feature>
<feature type="glycosylation site" description="N-linked (GlcNAc...) asparagine" evidence="4">
    <location>
        <position position="413"/>
    </location>
</feature>
<feature type="glycosylation site" description="N-linked (GlcNAc...) asparagine" evidence="4">
    <location>
        <position position="467"/>
    </location>
</feature>
<feature type="glycosylation site" description="N-linked (GlcNAc...) asparagine" evidence="4">
    <location>
        <position position="559"/>
    </location>
</feature>
<feature type="glycosylation site" description="N-linked (GlcNAc...) asparagine" evidence="4">
    <location>
        <position position="603"/>
    </location>
</feature>
<feature type="glycosylation site" description="N-linked (GlcNAc...) asparagine" evidence="4">
    <location>
        <position position="613"/>
    </location>
</feature>
<name>SBT4A_ARATH</name>
<sequence length="693" mass="74246">MAKLREASFCALACVLVLFLSFVSADTYNRQDKQVYVVYMGSLPSQPDYKPTSDHISILQQVTGESSMEGRLVRSYKKSFNGFSARLTESERKRVAEMEGVVSVFPSKKYKLHTTASWDFMGLKEGKNTKRNLAVESDTIVGVFDTGISPESESFSGKGFGPPPKKWKGVCKGGKNFTCNNKLIGARDYTNEGTRDIEGHGTHTASTAAGNVVENTSFYGIGNGTARGGVPDSRIAAYKVCSGAGCSSEYILSAFDDAIADGVDVISASLGGDTAYMYEKDPIAIGAFHAMAKGILTVQSAGNNGPNPTVSVAPWILTVAASTTNRRIVTKVVLGNGKTLVGQSVNAFDLKGKQYPLVYETSVEKCNNESLTTLALSFLTLTPQSNEQIISMFHTLIMWSPKATILKSEAIFNQTDPKVAGFSSRGPNTIAVDILKPDITAPGVEILAAYSPLVSPSATTLDNRRVNYTITSGTSMACPHVSGVAAYIKTFHPEWYPSMIQSAIMTTAWPMNPSGTDAVSTEFAYGSGHIDPIAAINPGLVYELGKSDHIAFLCGLNYNATTLKLIAGEAVTCTGKTLPRNLNYPSMSAKLSKSKSSFTVTFNRTVTNVGTSNSTYKSKVVINHGSKLKVKVSPSVLSMKSVNEKQSFTVSVSGNDLNPKLPSSANLIWSDGTHNVRSPIVVYTDYASSVDIF</sequence>
<gene>
    <name evidence="7" type="primary">SBT4.10</name>
    <name evidence="9" type="ordered locus">At5g58810</name>
    <name evidence="10" type="ORF">K19M22.1</name>
</gene>
<comment type="subcellular location">
    <subcellularLocation>
        <location evidence="2">Secreted</location>
    </subcellularLocation>
</comment>
<comment type="PTM">
    <text evidence="1">The C-terminal propeptide is autocleaved.</text>
</comment>
<comment type="similarity">
    <text evidence="8">Belongs to the peptidase S8 family.</text>
</comment>
<comment type="caution">
    <text evidence="8">Could be the product of a pseudogene.</text>
</comment>
<proteinExistence type="uncertain"/>
<reference key="1">
    <citation type="journal article" date="1998" name="DNA Res.">
        <title>Structural analysis of Arabidopsis thaliana chromosome 5. VIII. Sequence features of the regions of 1,081,958 bp covered by seventeen physically assigned P1 and TAC clones.</title>
        <authorList>
            <person name="Asamizu E."/>
            <person name="Sato S."/>
            <person name="Kaneko T."/>
            <person name="Nakamura Y."/>
            <person name="Kotani H."/>
            <person name="Miyajima N."/>
            <person name="Tabata S."/>
        </authorList>
    </citation>
    <scope>NUCLEOTIDE SEQUENCE [LARGE SCALE GENOMIC DNA]</scope>
    <source>
        <strain>cv. Columbia</strain>
    </source>
</reference>
<reference key="2">
    <citation type="journal article" date="2017" name="Plant J.">
        <title>Araport11: a complete reannotation of the Arabidopsis thaliana reference genome.</title>
        <authorList>
            <person name="Cheng C.Y."/>
            <person name="Krishnakumar V."/>
            <person name="Chan A.P."/>
            <person name="Thibaud-Nissen F."/>
            <person name="Schobel S."/>
            <person name="Town C.D."/>
        </authorList>
    </citation>
    <scope>GENOME REANNOTATION</scope>
    <source>
        <strain>cv. Columbia</strain>
    </source>
</reference>
<reference key="3">
    <citation type="journal article" date="2005" name="PLoS Comput. Biol.">
        <title>Inferring hypotheses on functional relationships of genes: Analysis of the Arabidopsis thaliana subtilase gene family.</title>
        <authorList>
            <person name="Rautengarten C."/>
            <person name="Steinhauser D."/>
            <person name="Bussis D."/>
            <person name="Stintzi A."/>
            <person name="Schaller A."/>
            <person name="Kopka J."/>
            <person name="Altmann T."/>
        </authorList>
    </citation>
    <scope>GENE FAMILY</scope>
    <scope>NOMENCLATURE</scope>
</reference>
<accession>Q9FIM8</accession>
<evidence type="ECO:0000250" key="1">
    <source>
        <dbReference type="UniProtKB" id="Q39547"/>
    </source>
</evidence>
<evidence type="ECO:0000250" key="2">
    <source>
        <dbReference type="UniProtKB" id="Q84WS0"/>
    </source>
</evidence>
<evidence type="ECO:0000255" key="3"/>
<evidence type="ECO:0000255" key="4">
    <source>
        <dbReference type="PROSITE-ProRule" id="PRU00498"/>
    </source>
</evidence>
<evidence type="ECO:0000255" key="5">
    <source>
        <dbReference type="PROSITE-ProRule" id="PRU01240"/>
    </source>
</evidence>
<evidence type="ECO:0000255" key="6">
    <source>
        <dbReference type="PROSITE-ProRule" id="PRU10082"/>
    </source>
</evidence>
<evidence type="ECO:0000303" key="7">
    <source>
    </source>
</evidence>
<evidence type="ECO:0000305" key="8"/>
<evidence type="ECO:0000312" key="9">
    <source>
        <dbReference type="Araport" id="AT5G58810"/>
    </source>
</evidence>
<evidence type="ECO:0000312" key="10">
    <source>
        <dbReference type="EMBL" id="BAB09626.1"/>
    </source>
</evidence>
<keyword id="KW-0068">Autocatalytic cleavage</keyword>
<keyword id="KW-0325">Glycoprotein</keyword>
<keyword id="KW-0378">Hydrolase</keyword>
<keyword id="KW-0645">Protease</keyword>
<keyword id="KW-1185">Reference proteome</keyword>
<keyword id="KW-0964">Secreted</keyword>
<keyword id="KW-0720">Serine protease</keyword>
<keyword id="KW-0732">Signal</keyword>
<keyword id="KW-0865">Zymogen</keyword>